<keyword id="KW-0050">Antiport</keyword>
<keyword id="KW-0997">Cell inner membrane</keyword>
<keyword id="KW-1003">Cell membrane</keyword>
<keyword id="KW-0406">Ion transport</keyword>
<keyword id="KW-0472">Membrane</keyword>
<keyword id="KW-0915">Sodium</keyword>
<keyword id="KW-0739">Sodium transport</keyword>
<keyword id="KW-0812">Transmembrane</keyword>
<keyword id="KW-1133">Transmembrane helix</keyword>
<keyword id="KW-0813">Transport</keyword>
<accession>A0RRP1</accession>
<gene>
    <name evidence="1" type="primary">nhaA2</name>
    <name type="ordered locus">CFF8240_1756</name>
</gene>
<evidence type="ECO:0000255" key="1">
    <source>
        <dbReference type="HAMAP-Rule" id="MF_01844"/>
    </source>
</evidence>
<sequence length="394" mass="43320">MKINLNFVKHESFGGVLLIIATILALLFQNGFLNHFYTEILRAEFTVGFRDFNLSKPLILWVNDGLMAIFFFVVGLELKREILQGELSKPSQIALPTIGALGGVILPAVIFWAFNHGNDFAIRGWAIPTATDIAFALGVLMLLGKRIPSSLKIFLLTLAIIDDLCAIVIIAIFYTTKLSFISFVIAGICLFALWVLNKFKVSKKSAYILVTLILWVSVLKSGVHATIAGVVAAFFIPMRDDSGKSLLVELEHDLQGITSYFILPVFAFVNAGVSLAGVQINQLLNSVGMGIFFGLLIGKQVGVFLFSYIFIKLGFAKLPEGSSWTQFYGVCILTGIGFTMSLFVNSLAYHDSNEFFHADKLGILLASFTAGVIGYIYLLVFSKVAKNHRKDNES</sequence>
<name>NHAA2_CAMFF</name>
<organism>
    <name type="scientific">Campylobacter fetus subsp. fetus (strain 82-40)</name>
    <dbReference type="NCBI Taxonomy" id="360106"/>
    <lineage>
        <taxon>Bacteria</taxon>
        <taxon>Pseudomonadati</taxon>
        <taxon>Campylobacterota</taxon>
        <taxon>Epsilonproteobacteria</taxon>
        <taxon>Campylobacterales</taxon>
        <taxon>Campylobacteraceae</taxon>
        <taxon>Campylobacter</taxon>
    </lineage>
</organism>
<comment type="function">
    <text evidence="1">Na(+)/H(+) antiporter that extrudes sodium in exchange for external protons.</text>
</comment>
<comment type="catalytic activity">
    <reaction evidence="1">
        <text>Na(+)(in) + 2 H(+)(out) = Na(+)(out) + 2 H(+)(in)</text>
        <dbReference type="Rhea" id="RHEA:29251"/>
        <dbReference type="ChEBI" id="CHEBI:15378"/>
        <dbReference type="ChEBI" id="CHEBI:29101"/>
    </reaction>
    <physiologicalReaction direction="left-to-right" evidence="1">
        <dbReference type="Rhea" id="RHEA:29252"/>
    </physiologicalReaction>
</comment>
<comment type="subcellular location">
    <subcellularLocation>
        <location evidence="1">Cell inner membrane</location>
        <topology evidence="1">Multi-pass membrane protein</topology>
    </subcellularLocation>
</comment>
<comment type="similarity">
    <text evidence="1">Belongs to the NhaA Na(+)/H(+) (TC 2.A.33) antiporter family.</text>
</comment>
<protein>
    <recommendedName>
        <fullName evidence="1">Na(+)/H(+) antiporter NhaA 2</fullName>
    </recommendedName>
    <alternativeName>
        <fullName evidence="1">Sodium/proton antiporter NhaA 2</fullName>
    </alternativeName>
</protein>
<feature type="chain" id="PRO_0000334252" description="Na(+)/H(+) antiporter NhaA 2">
    <location>
        <begin position="1"/>
        <end position="394"/>
    </location>
</feature>
<feature type="transmembrane region" description="Helical" evidence="1">
    <location>
        <begin position="13"/>
        <end position="33"/>
    </location>
</feature>
<feature type="transmembrane region" description="Helical" evidence="1">
    <location>
        <begin position="58"/>
        <end position="78"/>
    </location>
</feature>
<feature type="transmembrane region" description="Helical" evidence="1">
    <location>
        <begin position="93"/>
        <end position="113"/>
    </location>
</feature>
<feature type="transmembrane region" description="Helical" evidence="1">
    <location>
        <begin position="124"/>
        <end position="144"/>
    </location>
</feature>
<feature type="transmembrane region" description="Helical" evidence="1">
    <location>
        <begin position="153"/>
        <end position="173"/>
    </location>
</feature>
<feature type="transmembrane region" description="Helical" evidence="1">
    <location>
        <begin position="176"/>
        <end position="196"/>
    </location>
</feature>
<feature type="transmembrane region" description="Helical" evidence="1">
    <location>
        <begin position="208"/>
        <end position="228"/>
    </location>
</feature>
<feature type="transmembrane region" description="Helical" evidence="1">
    <location>
        <begin position="260"/>
        <end position="280"/>
    </location>
</feature>
<feature type="transmembrane region" description="Helical" evidence="1">
    <location>
        <begin position="291"/>
        <end position="311"/>
    </location>
</feature>
<feature type="transmembrane region" description="Helical" evidence="1">
    <location>
        <begin position="327"/>
        <end position="347"/>
    </location>
</feature>
<feature type="transmembrane region" description="Helical" evidence="1">
    <location>
        <begin position="361"/>
        <end position="381"/>
    </location>
</feature>
<proteinExistence type="inferred from homology"/>
<dbReference type="EMBL" id="CP000487">
    <property type="protein sequence ID" value="ABK83024.1"/>
    <property type="molecule type" value="Genomic_DNA"/>
</dbReference>
<dbReference type="SMR" id="A0RRP1"/>
<dbReference type="KEGG" id="cff:CFF8240_1756"/>
<dbReference type="eggNOG" id="COG3004">
    <property type="taxonomic scope" value="Bacteria"/>
</dbReference>
<dbReference type="HOGENOM" id="CLU_015803_1_0_7"/>
<dbReference type="Proteomes" id="UP000000760">
    <property type="component" value="Chromosome"/>
</dbReference>
<dbReference type="GO" id="GO:0005886">
    <property type="term" value="C:plasma membrane"/>
    <property type="evidence" value="ECO:0007669"/>
    <property type="project" value="UniProtKB-SubCell"/>
</dbReference>
<dbReference type="GO" id="GO:0015385">
    <property type="term" value="F:sodium:proton antiporter activity"/>
    <property type="evidence" value="ECO:0007669"/>
    <property type="project" value="TreeGrafter"/>
</dbReference>
<dbReference type="GO" id="GO:0006885">
    <property type="term" value="P:regulation of pH"/>
    <property type="evidence" value="ECO:0007669"/>
    <property type="project" value="InterPro"/>
</dbReference>
<dbReference type="Gene3D" id="1.20.1530.10">
    <property type="entry name" value="Na+/H+ antiporter like domain"/>
    <property type="match status" value="1"/>
</dbReference>
<dbReference type="HAMAP" id="MF_01844">
    <property type="entry name" value="NhaA"/>
    <property type="match status" value="1"/>
</dbReference>
<dbReference type="InterPro" id="IPR023171">
    <property type="entry name" value="Na/H_antiporter_dom_sf"/>
</dbReference>
<dbReference type="InterPro" id="IPR004670">
    <property type="entry name" value="NhaA"/>
</dbReference>
<dbReference type="NCBIfam" id="TIGR00773">
    <property type="entry name" value="NhaA"/>
    <property type="match status" value="1"/>
</dbReference>
<dbReference type="NCBIfam" id="NF007111">
    <property type="entry name" value="PRK09560.1"/>
    <property type="match status" value="1"/>
</dbReference>
<dbReference type="NCBIfam" id="NF007112">
    <property type="entry name" value="PRK09561.1"/>
    <property type="match status" value="1"/>
</dbReference>
<dbReference type="PANTHER" id="PTHR30341:SF0">
    <property type="entry name" value="NA(+)_H(+) ANTIPORTER NHAA"/>
    <property type="match status" value="1"/>
</dbReference>
<dbReference type="PANTHER" id="PTHR30341">
    <property type="entry name" value="SODIUM ION/PROTON ANTIPORTER NHAA-RELATED"/>
    <property type="match status" value="1"/>
</dbReference>
<dbReference type="Pfam" id="PF06965">
    <property type="entry name" value="Na_H_antiport_1"/>
    <property type="match status" value="1"/>
</dbReference>
<reference key="1">
    <citation type="submission" date="2006-11" db="EMBL/GenBank/DDBJ databases">
        <title>Sequence of Campylobacter fetus subsp. fetus 82-40.</title>
        <authorList>
            <person name="Fouts D.E."/>
            <person name="Nelson K.E."/>
        </authorList>
    </citation>
    <scope>NUCLEOTIDE SEQUENCE [LARGE SCALE GENOMIC DNA]</scope>
    <source>
        <strain>82-40</strain>
    </source>
</reference>